<gene>
    <name evidence="1" type="primary">thiI</name>
    <name type="ordered locus">Nther_2351</name>
</gene>
<sequence length="413" mass="46620">MYNYLLIRYGEIGLKGKNRSYFEKSLVKNMQSALKDLEIGKIKSTQGRMYIPLSGSSDELTRVLDRVTRVFGIETVSPAVKVESDLEVIKKTALQVFKNHMDSISPQNQVSFKVDCRRADKLFSKNSMEMNQILGAHILDHVPGLKVDVKQPQILLQVEIREDGTYIFTEKIPGHGGLPIGTTGKGVLMLSGGIDSPVAGWLAMKRGIQVVGLHFHSYPFTSQRALKKVEDISQVLSRYGTGPTGGFKLITNHFTDIQKAIQNYCSESMWVTVMRRFMFYIANRMAQKEQAMTVVTGENVGQVASQTLESMHAVSQDVVNLPILRPLAGLDKKEIMSKAETIGTYDISIRPYEDCCTLFLPKNPKTRPSLEQTKREISKLNFEELVEESLEKTEIKYFEPYQDITEEELTFDV</sequence>
<dbReference type="EC" id="2.8.1.4" evidence="1"/>
<dbReference type="EMBL" id="CP001034">
    <property type="protein sequence ID" value="ACB85916.1"/>
    <property type="molecule type" value="Genomic_DNA"/>
</dbReference>
<dbReference type="RefSeq" id="WP_012448766.1">
    <property type="nucleotide sequence ID" value="NC_010718.1"/>
</dbReference>
<dbReference type="SMR" id="B2A8M8"/>
<dbReference type="FunCoup" id="B2A8M8">
    <property type="interactions" value="94"/>
</dbReference>
<dbReference type="STRING" id="457570.Nther_2351"/>
<dbReference type="KEGG" id="nth:Nther_2351"/>
<dbReference type="eggNOG" id="COG0301">
    <property type="taxonomic scope" value="Bacteria"/>
</dbReference>
<dbReference type="HOGENOM" id="CLU_037952_4_0_9"/>
<dbReference type="InParanoid" id="B2A8M8"/>
<dbReference type="OrthoDB" id="9773948at2"/>
<dbReference type="UniPathway" id="UPA00060"/>
<dbReference type="Proteomes" id="UP000001683">
    <property type="component" value="Chromosome"/>
</dbReference>
<dbReference type="GO" id="GO:0005829">
    <property type="term" value="C:cytosol"/>
    <property type="evidence" value="ECO:0007669"/>
    <property type="project" value="TreeGrafter"/>
</dbReference>
<dbReference type="GO" id="GO:0005524">
    <property type="term" value="F:ATP binding"/>
    <property type="evidence" value="ECO:0007669"/>
    <property type="project" value="UniProtKB-UniRule"/>
</dbReference>
<dbReference type="GO" id="GO:0004810">
    <property type="term" value="F:CCA tRNA nucleotidyltransferase activity"/>
    <property type="evidence" value="ECO:0007669"/>
    <property type="project" value="InterPro"/>
</dbReference>
<dbReference type="GO" id="GO:0000049">
    <property type="term" value="F:tRNA binding"/>
    <property type="evidence" value="ECO:0007669"/>
    <property type="project" value="UniProtKB-UniRule"/>
</dbReference>
<dbReference type="GO" id="GO:0140741">
    <property type="term" value="F:tRNA-uracil-4 sulfurtransferase activity"/>
    <property type="evidence" value="ECO:0007669"/>
    <property type="project" value="UniProtKB-EC"/>
</dbReference>
<dbReference type="GO" id="GO:0009228">
    <property type="term" value="P:thiamine biosynthetic process"/>
    <property type="evidence" value="ECO:0007669"/>
    <property type="project" value="UniProtKB-KW"/>
</dbReference>
<dbReference type="GO" id="GO:0009229">
    <property type="term" value="P:thiamine diphosphate biosynthetic process"/>
    <property type="evidence" value="ECO:0007669"/>
    <property type="project" value="UniProtKB-UniRule"/>
</dbReference>
<dbReference type="GO" id="GO:0052837">
    <property type="term" value="P:thiazole biosynthetic process"/>
    <property type="evidence" value="ECO:0007669"/>
    <property type="project" value="TreeGrafter"/>
</dbReference>
<dbReference type="GO" id="GO:0002937">
    <property type="term" value="P:tRNA 4-thiouridine biosynthesis"/>
    <property type="evidence" value="ECO:0007669"/>
    <property type="project" value="TreeGrafter"/>
</dbReference>
<dbReference type="CDD" id="cd01712">
    <property type="entry name" value="PPase_ThiI"/>
    <property type="match status" value="1"/>
</dbReference>
<dbReference type="CDD" id="cd11716">
    <property type="entry name" value="THUMP_ThiI"/>
    <property type="match status" value="1"/>
</dbReference>
<dbReference type="FunFam" id="3.40.50.620:FF:000053">
    <property type="entry name" value="Probable tRNA sulfurtransferase"/>
    <property type="match status" value="1"/>
</dbReference>
<dbReference type="Gene3D" id="3.30.2130.30">
    <property type="match status" value="1"/>
</dbReference>
<dbReference type="Gene3D" id="3.40.50.620">
    <property type="entry name" value="HUPs"/>
    <property type="match status" value="1"/>
</dbReference>
<dbReference type="HAMAP" id="MF_00021">
    <property type="entry name" value="ThiI"/>
    <property type="match status" value="1"/>
</dbReference>
<dbReference type="InterPro" id="IPR014729">
    <property type="entry name" value="Rossmann-like_a/b/a_fold"/>
</dbReference>
<dbReference type="InterPro" id="IPR020536">
    <property type="entry name" value="ThiI_AANH"/>
</dbReference>
<dbReference type="InterPro" id="IPR054173">
    <property type="entry name" value="ThiI_fer"/>
</dbReference>
<dbReference type="InterPro" id="IPR049961">
    <property type="entry name" value="ThiI_N"/>
</dbReference>
<dbReference type="InterPro" id="IPR004114">
    <property type="entry name" value="THUMP_dom"/>
</dbReference>
<dbReference type="InterPro" id="IPR049962">
    <property type="entry name" value="THUMP_ThiI"/>
</dbReference>
<dbReference type="InterPro" id="IPR003720">
    <property type="entry name" value="tRNA_STrfase"/>
</dbReference>
<dbReference type="InterPro" id="IPR050102">
    <property type="entry name" value="tRNA_sulfurtransferase_ThiI"/>
</dbReference>
<dbReference type="NCBIfam" id="TIGR00342">
    <property type="entry name" value="tRNA uracil 4-sulfurtransferase ThiI"/>
    <property type="match status" value="1"/>
</dbReference>
<dbReference type="PANTHER" id="PTHR43209">
    <property type="entry name" value="TRNA SULFURTRANSFERASE"/>
    <property type="match status" value="1"/>
</dbReference>
<dbReference type="PANTHER" id="PTHR43209:SF1">
    <property type="entry name" value="TRNA SULFURTRANSFERASE"/>
    <property type="match status" value="1"/>
</dbReference>
<dbReference type="Pfam" id="PF02568">
    <property type="entry name" value="ThiI"/>
    <property type="match status" value="1"/>
</dbReference>
<dbReference type="Pfam" id="PF22025">
    <property type="entry name" value="ThiI_fer"/>
    <property type="match status" value="1"/>
</dbReference>
<dbReference type="Pfam" id="PF02926">
    <property type="entry name" value="THUMP"/>
    <property type="match status" value="1"/>
</dbReference>
<dbReference type="SMART" id="SM00981">
    <property type="entry name" value="THUMP"/>
    <property type="match status" value="1"/>
</dbReference>
<dbReference type="SUPFAM" id="SSF52402">
    <property type="entry name" value="Adenine nucleotide alpha hydrolases-like"/>
    <property type="match status" value="1"/>
</dbReference>
<dbReference type="SUPFAM" id="SSF143437">
    <property type="entry name" value="THUMP domain-like"/>
    <property type="match status" value="1"/>
</dbReference>
<dbReference type="PROSITE" id="PS51165">
    <property type="entry name" value="THUMP"/>
    <property type="match status" value="1"/>
</dbReference>
<evidence type="ECO:0000255" key="1">
    <source>
        <dbReference type="HAMAP-Rule" id="MF_00021"/>
    </source>
</evidence>
<keyword id="KW-0067">ATP-binding</keyword>
<keyword id="KW-0963">Cytoplasm</keyword>
<keyword id="KW-0547">Nucleotide-binding</keyword>
<keyword id="KW-1185">Reference proteome</keyword>
<keyword id="KW-0694">RNA-binding</keyword>
<keyword id="KW-0784">Thiamine biosynthesis</keyword>
<keyword id="KW-0808">Transferase</keyword>
<keyword id="KW-0820">tRNA-binding</keyword>
<proteinExistence type="inferred from homology"/>
<organism>
    <name type="scientific">Natranaerobius thermophilus (strain ATCC BAA-1301 / DSM 18059 / JW/NM-WN-LF)</name>
    <dbReference type="NCBI Taxonomy" id="457570"/>
    <lineage>
        <taxon>Bacteria</taxon>
        <taxon>Bacillati</taxon>
        <taxon>Bacillota</taxon>
        <taxon>Clostridia</taxon>
        <taxon>Natranaerobiales</taxon>
        <taxon>Natranaerobiaceae</taxon>
        <taxon>Natranaerobius</taxon>
    </lineage>
</organism>
<reference key="1">
    <citation type="submission" date="2008-04" db="EMBL/GenBank/DDBJ databases">
        <title>Complete sequence of chromosome of Natranaerobius thermophilus JW/NM-WN-LF.</title>
        <authorList>
            <consortium name="US DOE Joint Genome Institute"/>
            <person name="Copeland A."/>
            <person name="Lucas S."/>
            <person name="Lapidus A."/>
            <person name="Glavina del Rio T."/>
            <person name="Dalin E."/>
            <person name="Tice H."/>
            <person name="Bruce D."/>
            <person name="Goodwin L."/>
            <person name="Pitluck S."/>
            <person name="Chertkov O."/>
            <person name="Brettin T."/>
            <person name="Detter J.C."/>
            <person name="Han C."/>
            <person name="Kuske C.R."/>
            <person name="Schmutz J."/>
            <person name="Larimer F."/>
            <person name="Land M."/>
            <person name="Hauser L."/>
            <person name="Kyrpides N."/>
            <person name="Lykidis A."/>
            <person name="Mesbah N.M."/>
            <person name="Wiegel J."/>
        </authorList>
    </citation>
    <scope>NUCLEOTIDE SEQUENCE [LARGE SCALE GENOMIC DNA]</scope>
    <source>
        <strain>ATCC BAA-1301 / DSM 18059 / JW/NM-WN-LF</strain>
    </source>
</reference>
<name>THII_NATTJ</name>
<feature type="chain" id="PRO_1000090025" description="Probable tRNA sulfurtransferase">
    <location>
        <begin position="1"/>
        <end position="413"/>
    </location>
</feature>
<feature type="domain" description="THUMP" evidence="1">
    <location>
        <begin position="61"/>
        <end position="171"/>
    </location>
</feature>
<feature type="binding site" evidence="1">
    <location>
        <begin position="189"/>
        <end position="190"/>
    </location>
    <ligand>
        <name>ATP</name>
        <dbReference type="ChEBI" id="CHEBI:30616"/>
    </ligand>
</feature>
<feature type="binding site" evidence="1">
    <location>
        <begin position="214"/>
        <end position="215"/>
    </location>
    <ligand>
        <name>ATP</name>
        <dbReference type="ChEBI" id="CHEBI:30616"/>
    </ligand>
</feature>
<feature type="binding site" evidence="1">
    <location>
        <position position="275"/>
    </location>
    <ligand>
        <name>ATP</name>
        <dbReference type="ChEBI" id="CHEBI:30616"/>
    </ligand>
</feature>
<feature type="binding site" evidence="1">
    <location>
        <position position="297"/>
    </location>
    <ligand>
        <name>ATP</name>
        <dbReference type="ChEBI" id="CHEBI:30616"/>
    </ligand>
</feature>
<feature type="binding site" evidence="1">
    <location>
        <position position="306"/>
    </location>
    <ligand>
        <name>ATP</name>
        <dbReference type="ChEBI" id="CHEBI:30616"/>
    </ligand>
</feature>
<accession>B2A8M8</accession>
<protein>
    <recommendedName>
        <fullName evidence="1">Probable tRNA sulfurtransferase</fullName>
        <ecNumber evidence="1">2.8.1.4</ecNumber>
    </recommendedName>
    <alternativeName>
        <fullName evidence="1">Sulfur carrier protein ThiS sulfurtransferase</fullName>
    </alternativeName>
    <alternativeName>
        <fullName evidence="1">Thiamine biosynthesis protein ThiI</fullName>
    </alternativeName>
    <alternativeName>
        <fullName evidence="1">tRNA 4-thiouridine synthase</fullName>
    </alternativeName>
</protein>
<comment type="function">
    <text evidence="1">Catalyzes the ATP-dependent transfer of a sulfur to tRNA to produce 4-thiouridine in position 8 of tRNAs, which functions as a near-UV photosensor. Also catalyzes the transfer of sulfur to the sulfur carrier protein ThiS, forming ThiS-thiocarboxylate. This is a step in the synthesis of thiazole, in the thiamine biosynthesis pathway. The sulfur is donated as persulfide by IscS.</text>
</comment>
<comment type="catalytic activity">
    <reaction evidence="1">
        <text>[ThiI sulfur-carrier protein]-S-sulfanyl-L-cysteine + a uridine in tRNA + 2 reduced [2Fe-2S]-[ferredoxin] + ATP + H(+) = [ThiI sulfur-carrier protein]-L-cysteine + a 4-thiouridine in tRNA + 2 oxidized [2Fe-2S]-[ferredoxin] + AMP + diphosphate</text>
        <dbReference type="Rhea" id="RHEA:24176"/>
        <dbReference type="Rhea" id="RHEA-COMP:10000"/>
        <dbReference type="Rhea" id="RHEA-COMP:10001"/>
        <dbReference type="Rhea" id="RHEA-COMP:13337"/>
        <dbReference type="Rhea" id="RHEA-COMP:13338"/>
        <dbReference type="Rhea" id="RHEA-COMP:13339"/>
        <dbReference type="Rhea" id="RHEA-COMP:13340"/>
        <dbReference type="ChEBI" id="CHEBI:15378"/>
        <dbReference type="ChEBI" id="CHEBI:29950"/>
        <dbReference type="ChEBI" id="CHEBI:30616"/>
        <dbReference type="ChEBI" id="CHEBI:33019"/>
        <dbReference type="ChEBI" id="CHEBI:33737"/>
        <dbReference type="ChEBI" id="CHEBI:33738"/>
        <dbReference type="ChEBI" id="CHEBI:61963"/>
        <dbReference type="ChEBI" id="CHEBI:65315"/>
        <dbReference type="ChEBI" id="CHEBI:136798"/>
        <dbReference type="ChEBI" id="CHEBI:456215"/>
        <dbReference type="EC" id="2.8.1.4"/>
    </reaction>
</comment>
<comment type="catalytic activity">
    <reaction evidence="1">
        <text>[ThiS sulfur-carrier protein]-C-terminal Gly-Gly-AMP + S-sulfanyl-L-cysteinyl-[cysteine desulfurase] + AH2 = [ThiS sulfur-carrier protein]-C-terminal-Gly-aminoethanethioate + L-cysteinyl-[cysteine desulfurase] + A + AMP + 2 H(+)</text>
        <dbReference type="Rhea" id="RHEA:43340"/>
        <dbReference type="Rhea" id="RHEA-COMP:12157"/>
        <dbReference type="Rhea" id="RHEA-COMP:12158"/>
        <dbReference type="Rhea" id="RHEA-COMP:12910"/>
        <dbReference type="Rhea" id="RHEA-COMP:19908"/>
        <dbReference type="ChEBI" id="CHEBI:13193"/>
        <dbReference type="ChEBI" id="CHEBI:15378"/>
        <dbReference type="ChEBI" id="CHEBI:17499"/>
        <dbReference type="ChEBI" id="CHEBI:29950"/>
        <dbReference type="ChEBI" id="CHEBI:61963"/>
        <dbReference type="ChEBI" id="CHEBI:90618"/>
        <dbReference type="ChEBI" id="CHEBI:232372"/>
        <dbReference type="ChEBI" id="CHEBI:456215"/>
    </reaction>
</comment>
<comment type="pathway">
    <text evidence="1">Cofactor biosynthesis; thiamine diphosphate biosynthesis.</text>
</comment>
<comment type="subcellular location">
    <subcellularLocation>
        <location evidence="1">Cytoplasm</location>
    </subcellularLocation>
</comment>
<comment type="similarity">
    <text evidence="1">Belongs to the ThiI family.</text>
</comment>